<dbReference type="EMBL" id="M95288">
    <property type="protein sequence ID" value="AAA27336.1"/>
    <property type="molecule type" value="Genomic_DNA"/>
</dbReference>
<dbReference type="PIR" id="C45045">
    <property type="entry name" value="C45045"/>
</dbReference>
<dbReference type="SMR" id="Q02175"/>
<dbReference type="STRING" id="32052.WB44_13680"/>
<dbReference type="GO" id="GO:0030089">
    <property type="term" value="C:phycobilisome"/>
    <property type="evidence" value="ECO:0007669"/>
    <property type="project" value="UniProtKB-KW"/>
</dbReference>
<dbReference type="Gene3D" id="1.25.10.10">
    <property type="entry name" value="Leucine-rich Repeat Variant"/>
    <property type="match status" value="1"/>
</dbReference>
<dbReference type="InterPro" id="IPR011989">
    <property type="entry name" value="ARM-like"/>
</dbReference>
<dbReference type="InterPro" id="IPR016024">
    <property type="entry name" value="ARM-type_fold"/>
</dbReference>
<dbReference type="Pfam" id="PF13646">
    <property type="entry name" value="HEAT_2"/>
    <property type="match status" value="1"/>
</dbReference>
<dbReference type="SUPFAM" id="SSF48371">
    <property type="entry name" value="ARM repeat"/>
    <property type="match status" value="1"/>
</dbReference>
<gene>
    <name type="primary">cpeZ</name>
</gene>
<sequence length="186" mass="20582">MDACVSMSENYFDEALPRLLALLNDPDPTIYRTAVKGLGVFGHGVLFPLLDLYDKTDNGTVKACCIKAFVQVAVNFPDAVFPEQAIQALKLALDDINPVVSQSALMTLGYFSKQEHEKERVIPILIQVCNSTNIAHVQSAVMSLAEIDSTEVDQCFERMINHDSTDVLIKEILEASMSRRQSLFGN</sequence>
<keyword id="KW-0042">Antenna complex</keyword>
<keyword id="KW-0605">Phycobilisome</keyword>
<accession>Q02175</accession>
<organism>
    <name type="scientific">Synechococcus sp. (strain WH8020)</name>
    <dbReference type="NCBI Taxonomy" id="32052"/>
    <lineage>
        <taxon>Bacteria</taxon>
        <taxon>Bacillati</taxon>
        <taxon>Cyanobacteriota</taxon>
        <taxon>Cyanophyceae</taxon>
        <taxon>Synechococcales</taxon>
        <taxon>Synechococcaceae</taxon>
        <taxon>Synechococcus</taxon>
    </lineage>
</organism>
<proteinExistence type="predicted"/>
<reference key="1">
    <citation type="journal article" date="1993" name="Plant Mol. Biol.">
        <title>Genes of the R-phycocyanin II locus of marine Synechococcus spp., and comparison of protein-chromophore interactions in phycocyanins differing in bilin composition.</title>
        <authorList>
            <person name="de Lorimier R."/>
            <person name="Wilbanks S.M."/>
            <person name="Glazer A.N."/>
        </authorList>
    </citation>
    <scope>NUCLEOTIDE SEQUENCE [GENOMIC DNA]</scope>
</reference>
<feature type="chain" id="PRO_0000199291" description="Bilin biosynthesis protein CpeZ">
    <location>
        <begin position="1"/>
        <end position="186"/>
    </location>
</feature>
<name>CPEZ_SYNPY</name>
<comment type="function">
    <text>Involved in the biosynthesis of bilin.</text>
</comment>
<protein>
    <recommendedName>
        <fullName>Bilin biosynthesis protein CpeZ</fullName>
    </recommendedName>
</protein>